<evidence type="ECO:0000250" key="1">
    <source>
        <dbReference type="UniProtKB" id="O08601"/>
    </source>
</evidence>
<evidence type="ECO:0000250" key="2">
    <source>
        <dbReference type="UniProtKB" id="P55157"/>
    </source>
</evidence>
<evidence type="ECO:0000255" key="3"/>
<evidence type="ECO:0000255" key="4">
    <source>
        <dbReference type="PROSITE-ProRule" id="PRU00557"/>
    </source>
</evidence>
<evidence type="ECO:0000269" key="5">
    <source>
    </source>
</evidence>
<evidence type="ECO:0000269" key="6">
    <source>
    </source>
</evidence>
<evidence type="ECO:0000269" key="7">
    <source>
    </source>
</evidence>
<evidence type="ECO:0000305" key="8">
    <source>
    </source>
</evidence>
<gene>
    <name type="primary">MTTP</name>
    <name type="synonym">MTP</name>
</gene>
<protein>
    <recommendedName>
        <fullName>Microsomal triglyceride transfer protein large subunit</fullName>
    </recommendedName>
</protein>
<feature type="signal peptide" evidence="3">
    <location>
        <begin position="1" status="less than"/>
        <end position="11"/>
    </location>
</feature>
<feature type="chain" id="PRO_0000041592" description="Microsomal triglyceride transfer protein large subunit">
    <location>
        <begin position="12"/>
        <end position="887"/>
    </location>
</feature>
<feature type="domain" description="Vitellogenin" evidence="4">
    <location>
        <begin position="21"/>
        <end position="655"/>
    </location>
</feature>
<feature type="disulfide bond" evidence="4">
    <location>
        <begin position="167"/>
        <end position="187"/>
    </location>
</feature>
<feature type="non-terminal residue">
    <location>
        <position position="1"/>
    </location>
</feature>
<proteinExistence type="evidence at protein level"/>
<reference key="1">
    <citation type="journal article" date="1993" name="Nature">
        <title>Cloning and gene defects in microsomal triglyceride transfer protein associated with abetalipoproteinaemia.</title>
        <authorList>
            <person name="Sharp D."/>
            <person name="Blinderman L."/>
            <person name="Combs K.A."/>
            <person name="Kienzle B."/>
            <person name="Ricci B."/>
            <person name="Wager-Smith K."/>
            <person name="Gil C.M."/>
            <person name="Turck C.W."/>
            <person name="Bouma M.-E."/>
            <person name="Rader D.J."/>
            <person name="Aggerbeck L.P."/>
            <person name="Gregg R.E."/>
            <person name="Gordon D.A."/>
            <person name="Wetterau J.R."/>
        </authorList>
    </citation>
    <scope>NUCLEOTIDE SEQUENCE [MRNA]</scope>
    <scope>PARTIAL PROTEIN SEQUENCE</scope>
    <source>
        <tissue>Small intestine</tissue>
    </source>
</reference>
<reference key="2">
    <citation type="journal article" date="1990" name="J. Biol. Chem.">
        <title>Protein disulfide isomerase is a component of the microsomal triglyceride transfer protein complex.</title>
        <authorList>
            <person name="Wetterau J.R."/>
            <person name="Combs K.A."/>
            <person name="Spinner S.N."/>
            <person name="Joiner B.J."/>
        </authorList>
    </citation>
    <scope>INTERACTION WITH P4HB</scope>
</reference>
<reference key="3">
    <citation type="journal article" date="1996" name="Proc. Natl. Acad. Sci. U.S.A.">
        <title>An inhibitor of the microsomal triglyceride transfer protein inhibits apoB secretion from HepG2 cells.</title>
        <authorList>
            <person name="Jamil H."/>
            <person name="Gordon D.A."/>
            <person name="Eustice D.C."/>
            <person name="Brooks C.M."/>
            <person name="Dickson J.K. Jr."/>
            <person name="Chen Y."/>
            <person name="Ricci B."/>
            <person name="Chu C.H."/>
            <person name="Harrity T.W."/>
            <person name="Ciosek C.P. Jr."/>
            <person name="Biller S.A."/>
            <person name="Gregg R.E."/>
            <person name="Wetterau J.R."/>
        </authorList>
    </citation>
    <scope>FUNCTION</scope>
    <scope>CATALYTIC ACTIVITY</scope>
</reference>
<reference key="4">
    <citation type="journal article" date="2005" name="J. Lipid Res.">
        <title>Transfer of cholesteryl esters and phospholipids as well as net deposition by microsomal triglyceride transfer protein.</title>
        <authorList>
            <person name="Rava P."/>
            <person name="Athar H."/>
            <person name="Johnson C."/>
            <person name="Hussain M.M."/>
        </authorList>
    </citation>
    <scope>FUNCTION</scope>
    <scope>CATALYTIC ACTIVITY</scope>
</reference>
<name>MTP_BOVIN</name>
<organism>
    <name type="scientific">Bos taurus</name>
    <name type="common">Bovine</name>
    <dbReference type="NCBI Taxonomy" id="9913"/>
    <lineage>
        <taxon>Eukaryota</taxon>
        <taxon>Metazoa</taxon>
        <taxon>Chordata</taxon>
        <taxon>Craniata</taxon>
        <taxon>Vertebrata</taxon>
        <taxon>Euteleostomi</taxon>
        <taxon>Mammalia</taxon>
        <taxon>Eutheria</taxon>
        <taxon>Laurasiatheria</taxon>
        <taxon>Artiodactyla</taxon>
        <taxon>Ruminantia</taxon>
        <taxon>Pecora</taxon>
        <taxon>Bovidae</taxon>
        <taxon>Bovinae</taxon>
        <taxon>Bos</taxon>
    </lineage>
</organism>
<keyword id="KW-0903">Direct protein sequencing</keyword>
<keyword id="KW-1015">Disulfide bond</keyword>
<keyword id="KW-0256">Endoplasmic reticulum</keyword>
<keyword id="KW-0333">Golgi apparatus</keyword>
<keyword id="KW-0445">Lipid transport</keyword>
<keyword id="KW-0446">Lipid-binding</keyword>
<keyword id="KW-1185">Reference proteome</keyword>
<keyword id="KW-0732">Signal</keyword>
<keyword id="KW-0813">Transport</keyword>
<accession>P55156</accession>
<sequence length="887" mass="99032">FLCFISSYSASVKGHTTGLSLNNDRLYKLTYSTEVFLDRGKGNLQDSVGYRISSNVDVALLWRSPDGDDNQLIQITMKDVNLENVNQQRGEKSIFKGKKSSQIIRKENLEAMQRPVLLHLIHGKIKEFYSYQNEPAAIENLKRGLASLFQMQLSSGTTNEVDISGDCKVTYQAHQDKVTKIKALDSCKIERAGFTTPHQVLGVTSKATSVTTYKIEDSFVVAVLSEEIRALRLNFLQSIAGKIVSRQKLELKTTEASVRLKPGKQVAAIIKAVDSKYTAIPIVGQVFQSKCKGCPSLSEHWQSIRKHLQPDNLSKAEAVRSFLAFIKHLRTAKKEEILQILKAENKEVLPQLVDAVTSAQTPDSLDAILDFLDFKSTESVILQERFLYACAFASHPDEELLRALISKFKGSFGSNDIRESVMIIIGALVRKLCQNQGCKLKGVIEAKKLILGGLEKAEKKEDIVMYLLALKNARLPEGIPLLLKYTETGEGPISHLAATTLQRYDVPFITDEVKKTMNRIYHQNRKIHEKTVRTTAAAIILKNNPSYMEVKNILLSIGELPKEMNKYMLSIVQDILRFETPASKMVRQVLKEMVAHNYDRFSKSGSSSAYTGYVERTSHSASTYSLDILYSGSGILRRSNLNIFQYIEKTPLHGIQVVIEAQGLEALIAATPDEGEENLDSYAGLSALLFDVQLRPVTFFNGYSDLMSKMLSASSDPMSVVKGLLLLIDHSQELQLQSGLKANMDVQGGLAIDITGAMEFSLWYRESKTRVKNRVSVLITGGITVDSSFVKAGLEIGAETEAGLEFISTVQFSQYPFLVCLQMDKEDVPYRQFETKYERLSTGRGYISRKRKESLIGGCEFPLHQENSDMCKVVFAPQPESSSSGWF</sequence>
<dbReference type="EMBL" id="X78567">
    <property type="protein sequence ID" value="CAA55310.1"/>
    <property type="molecule type" value="mRNA"/>
</dbReference>
<dbReference type="PIR" id="A46764">
    <property type="entry name" value="A46764"/>
</dbReference>
<dbReference type="SMR" id="P55156"/>
<dbReference type="FunCoup" id="P55156">
    <property type="interactions" value="283"/>
</dbReference>
<dbReference type="STRING" id="9913.ENSBTAP00000015850"/>
<dbReference type="BindingDB" id="P55156"/>
<dbReference type="ChEMBL" id="CHEMBL2934"/>
<dbReference type="SwissLipids" id="SLP:000000409"/>
<dbReference type="PaxDb" id="9913-ENSBTAP00000015850"/>
<dbReference type="PeptideAtlas" id="P55156"/>
<dbReference type="eggNOG" id="KOG4337">
    <property type="taxonomic scope" value="Eukaryota"/>
</dbReference>
<dbReference type="HOGENOM" id="CLU_014703_0_0_1"/>
<dbReference type="InParanoid" id="P55156"/>
<dbReference type="OrthoDB" id="5865932at2759"/>
<dbReference type="Proteomes" id="UP000009136">
    <property type="component" value="Unplaced"/>
</dbReference>
<dbReference type="GO" id="GO:0016323">
    <property type="term" value="C:basolateral plasma membrane"/>
    <property type="evidence" value="ECO:0000318"/>
    <property type="project" value="GO_Central"/>
</dbReference>
<dbReference type="GO" id="GO:0005783">
    <property type="term" value="C:endoplasmic reticulum"/>
    <property type="evidence" value="ECO:0000250"/>
    <property type="project" value="UniProtKB"/>
</dbReference>
<dbReference type="GO" id="GO:0005794">
    <property type="term" value="C:Golgi apparatus"/>
    <property type="evidence" value="ECO:0000250"/>
    <property type="project" value="UniProtKB"/>
</dbReference>
<dbReference type="GO" id="GO:1902388">
    <property type="term" value="F:ceramide 1-phosphate transfer activity"/>
    <property type="evidence" value="ECO:0000250"/>
    <property type="project" value="UniProtKB"/>
</dbReference>
<dbReference type="GO" id="GO:0120020">
    <property type="term" value="F:cholesterol transfer activity"/>
    <property type="evidence" value="ECO:0000314"/>
    <property type="project" value="UniProtKB"/>
</dbReference>
<dbReference type="GO" id="GO:0008289">
    <property type="term" value="F:lipid binding"/>
    <property type="evidence" value="ECO:0007669"/>
    <property type="project" value="UniProtKB-KW"/>
</dbReference>
<dbReference type="GO" id="GO:1904121">
    <property type="term" value="F:phosphatidylethanolamine transfer activity"/>
    <property type="evidence" value="ECO:0000314"/>
    <property type="project" value="UniProtKB"/>
</dbReference>
<dbReference type="GO" id="GO:0005548">
    <property type="term" value="F:phospholipid transporter activity"/>
    <property type="evidence" value="ECO:0000318"/>
    <property type="project" value="GO_Central"/>
</dbReference>
<dbReference type="GO" id="GO:0046982">
    <property type="term" value="F:protein heterodimerization activity"/>
    <property type="evidence" value="ECO:0000250"/>
    <property type="project" value="UniProtKB"/>
</dbReference>
<dbReference type="GO" id="GO:0140344">
    <property type="term" value="F:triglyceride transfer activity"/>
    <property type="evidence" value="ECO:0000314"/>
    <property type="project" value="UniProtKB"/>
</dbReference>
<dbReference type="GO" id="GO:0042632">
    <property type="term" value="P:cholesterol homeostasis"/>
    <property type="evidence" value="ECO:0000318"/>
    <property type="project" value="GO_Central"/>
</dbReference>
<dbReference type="GO" id="GO:0042157">
    <property type="term" value="P:lipoprotein metabolic process"/>
    <property type="evidence" value="ECO:0000318"/>
    <property type="project" value="GO_Central"/>
</dbReference>
<dbReference type="GO" id="GO:0015914">
    <property type="term" value="P:phospholipid transport"/>
    <property type="evidence" value="ECO:0000250"/>
    <property type="project" value="UniProtKB"/>
</dbReference>
<dbReference type="GO" id="GO:0034377">
    <property type="term" value="P:plasma lipoprotein particle assembly"/>
    <property type="evidence" value="ECO:0000250"/>
    <property type="project" value="UniProtKB"/>
</dbReference>
<dbReference type="GO" id="GO:0009306">
    <property type="term" value="P:protein secretion"/>
    <property type="evidence" value="ECO:0000250"/>
    <property type="project" value="UniProtKB"/>
</dbReference>
<dbReference type="GO" id="GO:0034197">
    <property type="term" value="P:triglyceride transport"/>
    <property type="evidence" value="ECO:0000250"/>
    <property type="project" value="UniProtKB"/>
</dbReference>
<dbReference type="FunFam" id="2.30.230.10:FF:000001">
    <property type="entry name" value="Microsomal triglyceride transfer protein large subunit"/>
    <property type="match status" value="1"/>
</dbReference>
<dbReference type="FunFam" id="1.25.10.20:FF:000001">
    <property type="entry name" value="microsomal triglyceride transfer protein large subunit"/>
    <property type="match status" value="1"/>
</dbReference>
<dbReference type="Gene3D" id="2.30.230.10">
    <property type="entry name" value="Lipovitellin, beta-sheet shell regions, chain A"/>
    <property type="match status" value="1"/>
</dbReference>
<dbReference type="Gene3D" id="1.25.10.20">
    <property type="entry name" value="Vitellinogen, superhelical"/>
    <property type="match status" value="1"/>
</dbReference>
<dbReference type="InterPro" id="IPR015819">
    <property type="entry name" value="Lipid_transp_b-sht_shell"/>
</dbReference>
<dbReference type="InterPro" id="IPR011030">
    <property type="entry name" value="Lipovitellin_superhlx_dom"/>
</dbReference>
<dbReference type="InterPro" id="IPR045811">
    <property type="entry name" value="MTP_lip-bd"/>
</dbReference>
<dbReference type="InterPro" id="IPR039988">
    <property type="entry name" value="MTTP"/>
</dbReference>
<dbReference type="InterPro" id="IPR015816">
    <property type="entry name" value="Vitellinogen_b-sht_N"/>
</dbReference>
<dbReference type="InterPro" id="IPR001747">
    <property type="entry name" value="Vitellogenin_N"/>
</dbReference>
<dbReference type="PANTHER" id="PTHR13024:SF1">
    <property type="entry name" value="MICROSOMAL TRIGLYCERIDE TRANSFER PROTEIN LARGE SUBUNIT"/>
    <property type="match status" value="1"/>
</dbReference>
<dbReference type="PANTHER" id="PTHR13024">
    <property type="entry name" value="MICROSOMAL TRIGLYCERIDE TRANSFER PROTEIN, LARGE SUBUNIT"/>
    <property type="match status" value="1"/>
</dbReference>
<dbReference type="Pfam" id="PF19444">
    <property type="entry name" value="MTP_lip_bd"/>
    <property type="match status" value="1"/>
</dbReference>
<dbReference type="Pfam" id="PF01347">
    <property type="entry name" value="Vitellogenin_N"/>
    <property type="match status" value="1"/>
</dbReference>
<dbReference type="SMART" id="SM00638">
    <property type="entry name" value="LPD_N"/>
    <property type="match status" value="1"/>
</dbReference>
<dbReference type="SUPFAM" id="SSF56968">
    <property type="entry name" value="Lipovitellin-phosvitin complex, beta-sheet shell regions"/>
    <property type="match status" value="1"/>
</dbReference>
<dbReference type="SUPFAM" id="SSF48431">
    <property type="entry name" value="Lipovitellin-phosvitin complex, superhelical domain"/>
    <property type="match status" value="1"/>
</dbReference>
<dbReference type="PROSITE" id="PS51211">
    <property type="entry name" value="VITELLOGENIN"/>
    <property type="match status" value="1"/>
</dbReference>
<comment type="function">
    <text evidence="1 2 5 7">Catalyzes the transport of triglyceride, cholesteryl ester, and phospholipid between phospholipid surfaces (PubMed:15897609, PubMed:8876250). Required for the assembly and secretion of plasma lipoproteins that contain apolipoprotein B (By similarity). May be involved in regulating cholesteryl ester biosynthesis in cells that produce lipoproteins (By similarity).</text>
</comment>
<comment type="catalytic activity">
    <reaction evidence="2">
        <text>a 1,2-diacyl-sn-glycero-3-phosphocholine(in) = a 1,2-diacyl-sn-glycero-3-phosphocholine(out)</text>
        <dbReference type="Rhea" id="RHEA:38571"/>
        <dbReference type="ChEBI" id="CHEBI:57643"/>
    </reaction>
    <physiologicalReaction direction="left-to-right" evidence="2">
        <dbReference type="Rhea" id="RHEA:38572"/>
    </physiologicalReaction>
</comment>
<comment type="catalytic activity">
    <reaction evidence="5">
        <text>a 1,2-diacyl-sn-glycero-3-phosphoethanolamine(in) = a 1,2-diacyl-sn-glycero-3-phosphoethanolamine(out)</text>
        <dbReference type="Rhea" id="RHEA:38895"/>
        <dbReference type="ChEBI" id="CHEBI:64612"/>
    </reaction>
    <physiologicalReaction direction="left-to-right" evidence="8">
        <dbReference type="Rhea" id="RHEA:38896"/>
    </physiologicalReaction>
</comment>
<comment type="catalytic activity">
    <reaction evidence="5">
        <text>a cholesterol ester(in) = a cholesterol ester(out)</text>
        <dbReference type="Rhea" id="RHEA:39007"/>
        <dbReference type="ChEBI" id="CHEBI:17002"/>
    </reaction>
    <physiologicalReaction direction="left-to-right" evidence="8">
        <dbReference type="Rhea" id="RHEA:39008"/>
    </physiologicalReaction>
</comment>
<comment type="catalytic activity">
    <reaction evidence="5 7">
        <text>a triacyl-sn-glycerol(in) = a triacyl-sn-glycerol(out)</text>
        <dbReference type="Rhea" id="RHEA:39011"/>
        <dbReference type="ChEBI" id="CHEBI:64615"/>
    </reaction>
    <physiologicalReaction direction="left-to-right" evidence="8">
        <dbReference type="Rhea" id="RHEA:39012"/>
    </physiologicalReaction>
</comment>
<comment type="subunit">
    <text evidence="1 2 6">Heterodimer; heterodimerizes with the protein disulfide isomerase (P4HB/PDI) (PubMed:2351674). Interacts with APOB (By similarity). Interacts with PRAP1 (By similarity).</text>
</comment>
<comment type="subcellular location">
    <subcellularLocation>
        <location evidence="2">Endoplasmic reticulum</location>
    </subcellularLocation>
    <subcellularLocation>
        <location evidence="2">Golgi apparatus</location>
    </subcellularLocation>
    <text evidence="2">Colocalizes with P4HB/PDI in the endoplasmic reticulum.</text>
</comment>